<dbReference type="EMBL" id="AE017355">
    <property type="protein sequence ID" value="AAT63886.1"/>
    <property type="molecule type" value="Genomic_DNA"/>
</dbReference>
<dbReference type="RefSeq" id="WP_000101799.1">
    <property type="nucleotide sequence ID" value="NC_005957.1"/>
</dbReference>
<dbReference type="RefSeq" id="YP_034487.1">
    <property type="nucleotide sequence ID" value="NC_005957.1"/>
</dbReference>
<dbReference type="SMR" id="Q6HPN3"/>
<dbReference type="GeneID" id="93010917"/>
<dbReference type="KEGG" id="btk:BT9727_0131"/>
<dbReference type="PATRIC" id="fig|281309.8.peg.133"/>
<dbReference type="HOGENOM" id="CLU_072439_5_0_9"/>
<dbReference type="Proteomes" id="UP000001301">
    <property type="component" value="Chromosome"/>
</dbReference>
<dbReference type="GO" id="GO:1990904">
    <property type="term" value="C:ribonucleoprotein complex"/>
    <property type="evidence" value="ECO:0007669"/>
    <property type="project" value="UniProtKB-KW"/>
</dbReference>
<dbReference type="GO" id="GO:0005840">
    <property type="term" value="C:ribosome"/>
    <property type="evidence" value="ECO:0007669"/>
    <property type="project" value="UniProtKB-KW"/>
</dbReference>
<dbReference type="GO" id="GO:0019843">
    <property type="term" value="F:rRNA binding"/>
    <property type="evidence" value="ECO:0007669"/>
    <property type="project" value="UniProtKB-UniRule"/>
</dbReference>
<dbReference type="GO" id="GO:0003735">
    <property type="term" value="F:structural constituent of ribosome"/>
    <property type="evidence" value="ECO:0007669"/>
    <property type="project" value="InterPro"/>
</dbReference>
<dbReference type="GO" id="GO:0006412">
    <property type="term" value="P:translation"/>
    <property type="evidence" value="ECO:0007669"/>
    <property type="project" value="UniProtKB-UniRule"/>
</dbReference>
<dbReference type="FunFam" id="3.30.420.80:FF:000001">
    <property type="entry name" value="30S ribosomal protein S11"/>
    <property type="match status" value="1"/>
</dbReference>
<dbReference type="Gene3D" id="3.30.420.80">
    <property type="entry name" value="Ribosomal protein S11"/>
    <property type="match status" value="1"/>
</dbReference>
<dbReference type="HAMAP" id="MF_01310">
    <property type="entry name" value="Ribosomal_uS11"/>
    <property type="match status" value="1"/>
</dbReference>
<dbReference type="InterPro" id="IPR001971">
    <property type="entry name" value="Ribosomal_uS11"/>
</dbReference>
<dbReference type="InterPro" id="IPR019981">
    <property type="entry name" value="Ribosomal_uS11_bac-type"/>
</dbReference>
<dbReference type="InterPro" id="IPR018102">
    <property type="entry name" value="Ribosomal_uS11_CS"/>
</dbReference>
<dbReference type="InterPro" id="IPR036967">
    <property type="entry name" value="Ribosomal_uS11_sf"/>
</dbReference>
<dbReference type="NCBIfam" id="NF003698">
    <property type="entry name" value="PRK05309.1"/>
    <property type="match status" value="1"/>
</dbReference>
<dbReference type="NCBIfam" id="TIGR03632">
    <property type="entry name" value="uS11_bact"/>
    <property type="match status" value="1"/>
</dbReference>
<dbReference type="PANTHER" id="PTHR11759">
    <property type="entry name" value="40S RIBOSOMAL PROTEIN S14/30S RIBOSOMAL PROTEIN S11"/>
    <property type="match status" value="1"/>
</dbReference>
<dbReference type="Pfam" id="PF00411">
    <property type="entry name" value="Ribosomal_S11"/>
    <property type="match status" value="1"/>
</dbReference>
<dbReference type="PIRSF" id="PIRSF002131">
    <property type="entry name" value="Ribosomal_S11"/>
    <property type="match status" value="1"/>
</dbReference>
<dbReference type="SUPFAM" id="SSF53137">
    <property type="entry name" value="Translational machinery components"/>
    <property type="match status" value="1"/>
</dbReference>
<dbReference type="PROSITE" id="PS00054">
    <property type="entry name" value="RIBOSOMAL_S11"/>
    <property type="match status" value="1"/>
</dbReference>
<feature type="chain" id="PRO_0000123102" description="Small ribosomal subunit protein uS11">
    <location>
        <begin position="1"/>
        <end position="129"/>
    </location>
</feature>
<reference key="1">
    <citation type="journal article" date="2006" name="J. Bacteriol.">
        <title>Pathogenomic sequence analysis of Bacillus cereus and Bacillus thuringiensis isolates closely related to Bacillus anthracis.</title>
        <authorList>
            <person name="Han C.S."/>
            <person name="Xie G."/>
            <person name="Challacombe J.F."/>
            <person name="Altherr M.R."/>
            <person name="Bhotika S.S."/>
            <person name="Bruce D."/>
            <person name="Campbell C.S."/>
            <person name="Campbell M.L."/>
            <person name="Chen J."/>
            <person name="Chertkov O."/>
            <person name="Cleland C."/>
            <person name="Dimitrijevic M."/>
            <person name="Doggett N.A."/>
            <person name="Fawcett J.J."/>
            <person name="Glavina T."/>
            <person name="Goodwin L.A."/>
            <person name="Hill K.K."/>
            <person name="Hitchcock P."/>
            <person name="Jackson P.J."/>
            <person name="Keim P."/>
            <person name="Kewalramani A.R."/>
            <person name="Longmire J."/>
            <person name="Lucas S."/>
            <person name="Malfatti S."/>
            <person name="McMurry K."/>
            <person name="Meincke L.J."/>
            <person name="Misra M."/>
            <person name="Moseman B.L."/>
            <person name="Mundt M."/>
            <person name="Munk A.C."/>
            <person name="Okinaka R.T."/>
            <person name="Parson-Quintana B."/>
            <person name="Reilly L.P."/>
            <person name="Richardson P."/>
            <person name="Robinson D.L."/>
            <person name="Rubin E."/>
            <person name="Saunders E."/>
            <person name="Tapia R."/>
            <person name="Tesmer J.G."/>
            <person name="Thayer N."/>
            <person name="Thompson L.S."/>
            <person name="Tice H."/>
            <person name="Ticknor L.O."/>
            <person name="Wills P.L."/>
            <person name="Brettin T.S."/>
            <person name="Gilna P."/>
        </authorList>
    </citation>
    <scope>NUCLEOTIDE SEQUENCE [LARGE SCALE GENOMIC DNA]</scope>
    <source>
        <strain>97-27</strain>
    </source>
</reference>
<sequence length="129" mass="13739">MARKTNTRKKRVKKNIEAGVAHIRSTFNNTIVTLTDTHGNALSWSSAGALGFRGSRKSTPFAAQMAAETAAKAAMEHGLKTLEVTVKGPGAGREAAIRALQAAGLEVTAIRDVTPVPHNGCRPPKRRRV</sequence>
<comment type="function">
    <text evidence="1">Located on the platform of the 30S subunit, it bridges several disparate RNA helices of the 16S rRNA. Forms part of the Shine-Dalgarno cleft in the 70S ribosome.</text>
</comment>
<comment type="subunit">
    <text evidence="1">Part of the 30S ribosomal subunit. Interacts with proteins S7 and S18. Binds to IF-3.</text>
</comment>
<comment type="similarity">
    <text evidence="1">Belongs to the universal ribosomal protein uS11 family.</text>
</comment>
<proteinExistence type="inferred from homology"/>
<evidence type="ECO:0000255" key="1">
    <source>
        <dbReference type="HAMAP-Rule" id="MF_01310"/>
    </source>
</evidence>
<evidence type="ECO:0000305" key="2"/>
<organism>
    <name type="scientific">Bacillus thuringiensis subsp. konkukian (strain 97-27)</name>
    <dbReference type="NCBI Taxonomy" id="281309"/>
    <lineage>
        <taxon>Bacteria</taxon>
        <taxon>Bacillati</taxon>
        <taxon>Bacillota</taxon>
        <taxon>Bacilli</taxon>
        <taxon>Bacillales</taxon>
        <taxon>Bacillaceae</taxon>
        <taxon>Bacillus</taxon>
        <taxon>Bacillus cereus group</taxon>
    </lineage>
</organism>
<accession>Q6HPN3</accession>
<protein>
    <recommendedName>
        <fullName evidence="1">Small ribosomal subunit protein uS11</fullName>
    </recommendedName>
    <alternativeName>
        <fullName evidence="2">30S ribosomal protein S11</fullName>
    </alternativeName>
</protein>
<keyword id="KW-0687">Ribonucleoprotein</keyword>
<keyword id="KW-0689">Ribosomal protein</keyword>
<keyword id="KW-0694">RNA-binding</keyword>
<keyword id="KW-0699">rRNA-binding</keyword>
<name>RS11_BACHK</name>
<gene>
    <name evidence="1" type="primary">rpsK</name>
    <name type="ordered locus">BT9727_0131</name>
</gene>